<organism>
    <name type="scientific">Danio rerio</name>
    <name type="common">Zebrafish</name>
    <name type="synonym">Brachydanio rerio</name>
    <dbReference type="NCBI Taxonomy" id="7955"/>
    <lineage>
        <taxon>Eukaryota</taxon>
        <taxon>Metazoa</taxon>
        <taxon>Chordata</taxon>
        <taxon>Craniata</taxon>
        <taxon>Vertebrata</taxon>
        <taxon>Euteleostomi</taxon>
        <taxon>Actinopterygii</taxon>
        <taxon>Neopterygii</taxon>
        <taxon>Teleostei</taxon>
        <taxon>Ostariophysi</taxon>
        <taxon>Cypriniformes</taxon>
        <taxon>Danionidae</taxon>
        <taxon>Danioninae</taxon>
        <taxon>Danio</taxon>
    </lineage>
</organism>
<evidence type="ECO:0000250" key="1"/>
<evidence type="ECO:0000250" key="2">
    <source>
        <dbReference type="UniProtKB" id="Q9CZW6"/>
    </source>
</evidence>
<evidence type="ECO:0000250" key="3">
    <source>
        <dbReference type="UniProtKB" id="Q9NTX7"/>
    </source>
</evidence>
<evidence type="ECO:0000255" key="4">
    <source>
        <dbReference type="PROSITE-ProRule" id="PRU00175"/>
    </source>
</evidence>
<evidence type="ECO:0000255" key="5">
    <source>
        <dbReference type="PROSITE-ProRule" id="PRU00248"/>
    </source>
</evidence>
<evidence type="ECO:0000256" key="6">
    <source>
        <dbReference type="SAM" id="MobiDB-lite"/>
    </source>
</evidence>
<evidence type="ECO:0000305" key="7"/>
<proteinExistence type="evidence at transcript level"/>
<sequence length="364" mass="38786">MASCGEVNLTVDSLTSGKKVSGEAVPEGSGSPSSPSLPVPECPICLQSCVHPVRLPCRHIFCFLCVKGASWHSKRCALCRREVPEDFLERPTLLSPEELKASATGGCGTGSSGHAWYYEGRNGWWQYDERTSRELEDAFSKGKKSAEMLIAGFLYVADLENMVQYRRNEHGRRRRMKRDVVDIPKKGVAGLRLDPDPNSSAGAVPAPAVVDVSVDGAAAERESSADGADTGVSGGRPQGTFVPAPIRPPTILGGHLTSPASSSDIQLVQTLAQLNISPNEQEPEEEDAEDEDDSAAPDASGYDSESGTSDDDEQVEDEDENEHTDGSQGKHRLQQLNRPPPGGGPANSGDRSGCPDGQCTVTKV</sequence>
<protein>
    <recommendedName>
        <fullName>E3 ubiquitin-protein ligase rnf146</fullName>
        <ecNumber>2.3.2.27</ecNumber>
    </recommendedName>
    <alternativeName>
        <fullName>RING finger protein 146</fullName>
    </alternativeName>
    <alternativeName>
        <fullName evidence="7">RING-type E3 ubiquitin transferase rnf146</fullName>
    </alternativeName>
</protein>
<feature type="chain" id="PRO_0000409505" description="E3 ubiquitin-protein ligase rnf146">
    <location>
        <begin position="1"/>
        <end position="364"/>
    </location>
</feature>
<feature type="domain" description="WWE" evidence="5">
    <location>
        <begin position="102"/>
        <end position="178"/>
    </location>
</feature>
<feature type="zinc finger region" description="RING-type" evidence="4">
    <location>
        <begin position="42"/>
        <end position="80"/>
    </location>
</feature>
<feature type="region of interest" description="Disordered" evidence="6">
    <location>
        <begin position="18"/>
        <end position="37"/>
    </location>
</feature>
<feature type="region of interest" description="Disordered" evidence="6">
    <location>
        <begin position="217"/>
        <end position="262"/>
    </location>
</feature>
<feature type="region of interest" description="Disordered" evidence="6">
    <location>
        <begin position="279"/>
        <end position="364"/>
    </location>
</feature>
<feature type="compositionally biased region" description="Low complexity" evidence="6">
    <location>
        <begin position="22"/>
        <end position="34"/>
    </location>
</feature>
<feature type="compositionally biased region" description="Acidic residues" evidence="6">
    <location>
        <begin position="281"/>
        <end position="295"/>
    </location>
</feature>
<feature type="compositionally biased region" description="Acidic residues" evidence="6">
    <location>
        <begin position="308"/>
        <end position="322"/>
    </location>
</feature>
<feature type="binding site" evidence="1">
    <location>
        <position position="118"/>
    </location>
    <ligand>
        <name>a glycoprotein</name>
        <dbReference type="ChEBI" id="CHEBI:17089"/>
    </ligand>
    <ligandPart>
        <name>poly[(1''-&gt;2')-ADP-alpha-D-ribose] group</name>
        <dbReference type="ChEBI" id="CHEBI:157741"/>
    </ligandPart>
</feature>
<feature type="binding site" evidence="1">
    <location>
        <position position="121"/>
    </location>
    <ligand>
        <name>a glycoprotein</name>
        <dbReference type="ChEBI" id="CHEBI:17089"/>
    </ligand>
    <ligandPart>
        <name>poly[(1''-&gt;2')-ADP-alpha-D-ribose] group</name>
        <dbReference type="ChEBI" id="CHEBI:157741"/>
    </ligandPart>
</feature>
<feature type="binding site" evidence="1">
    <location>
        <position position="125"/>
    </location>
    <ligand>
        <name>a glycoprotein</name>
        <dbReference type="ChEBI" id="CHEBI:17089"/>
    </ligand>
    <ligandPart>
        <name>poly[(1''-&gt;2')-ADP-alpha-D-ribose] group</name>
        <dbReference type="ChEBI" id="CHEBI:157741"/>
    </ligandPart>
</feature>
<feature type="binding site" evidence="1">
    <location>
        <position position="155"/>
    </location>
    <ligand>
        <name>a glycoprotein</name>
        <dbReference type="ChEBI" id="CHEBI:17089"/>
    </ligand>
    <ligandPart>
        <name>poly[(1''-&gt;2')-ADP-alpha-D-ribose] group</name>
        <dbReference type="ChEBI" id="CHEBI:157741"/>
    </ligandPart>
</feature>
<feature type="binding site" evidence="1">
    <location>
        <position position="164"/>
    </location>
    <ligand>
        <name>a glycoprotein</name>
        <dbReference type="ChEBI" id="CHEBI:17089"/>
    </ligand>
    <ligandPart>
        <name>poly[(1''-&gt;2')-ADP-alpha-D-ribose] group</name>
        <dbReference type="ChEBI" id="CHEBI:157741"/>
    </ligandPart>
</feature>
<feature type="binding site" evidence="1">
    <location>
        <position position="174"/>
    </location>
    <ligand>
        <name>a glycoprotein</name>
        <dbReference type="ChEBI" id="CHEBI:17089"/>
    </ligand>
    <ligandPart>
        <name>poly[(1''-&gt;2')-ADP-alpha-D-ribose] group</name>
        <dbReference type="ChEBI" id="CHEBI:157741"/>
    </ligandPart>
</feature>
<feature type="binding site" evidence="1">
    <location>
        <position position="186"/>
    </location>
    <ligand>
        <name>a glycoprotein</name>
        <dbReference type="ChEBI" id="CHEBI:17089"/>
    </ligand>
    <ligandPart>
        <name>poly[(1''-&gt;2')-ADP-alpha-D-ribose] group</name>
        <dbReference type="ChEBI" id="CHEBI:157741"/>
    </ligandPart>
</feature>
<name>RN146_DANRE</name>
<comment type="function">
    <text evidence="2 3">E3 ubiquitin-protein ligase that specifically binds poly-ADP-ribosylated proteins and mediates their ubiquitination and subsequent degradation. May regulate many important biological processes, such as cell survival and DNA damage response. Acts as an activator of the Wnt signaling pathway by mediating the ubiquitination of poly-ADP-ribosylated proteins. Neuroprotective protein. Protects against cell death induced by DNA damaging agents and rescues cells from G1 arrest. Promotes cell survival after gamma-irradiation. Facilitates DNA repair.</text>
</comment>
<comment type="catalytic activity">
    <reaction>
        <text>S-ubiquitinyl-[E2 ubiquitin-conjugating enzyme]-L-cysteine + [acceptor protein]-L-lysine = [E2 ubiquitin-conjugating enzyme]-L-cysteine + N(6)-ubiquitinyl-[acceptor protein]-L-lysine.</text>
        <dbReference type="EC" id="2.3.2.27"/>
    </reaction>
</comment>
<comment type="pathway">
    <text>Protein modification; protein ubiquitination.</text>
</comment>
<comment type="subcellular location">
    <subcellularLocation>
        <location evidence="1">Cytoplasm</location>
        <location evidence="1">Cytosol</location>
    </subcellularLocation>
    <subcellularLocation>
        <location evidence="1">Nucleus</location>
    </subcellularLocation>
    <text evidence="1">Translocates to the nucleus after DNA damage.</text>
</comment>
<comment type="domain">
    <text evidence="1">The WWE domain mediates non-covalent poly(ADP-ribose)-binding.</text>
</comment>
<keyword id="KW-0963">Cytoplasm</keyword>
<keyword id="KW-0479">Metal-binding</keyword>
<keyword id="KW-0539">Nucleus</keyword>
<keyword id="KW-1185">Reference proteome</keyword>
<keyword id="KW-0808">Transferase</keyword>
<keyword id="KW-0833">Ubl conjugation pathway</keyword>
<keyword id="KW-0879">Wnt signaling pathway</keyword>
<keyword id="KW-0862">Zinc</keyword>
<keyword id="KW-0863">Zinc-finger</keyword>
<gene>
    <name type="primary">rnf146</name>
</gene>
<accession>Q7ZUK0</accession>
<accession>E9QCU2</accession>
<dbReference type="EC" id="2.3.2.27"/>
<dbReference type="EMBL" id="CR354556">
    <property type="status" value="NOT_ANNOTATED_CDS"/>
    <property type="molecule type" value="Genomic_DNA"/>
</dbReference>
<dbReference type="EMBL" id="BC048897">
    <property type="protein sequence ID" value="AAH48897.1"/>
    <property type="molecule type" value="mRNA"/>
</dbReference>
<dbReference type="SMR" id="Q7ZUK0"/>
<dbReference type="FunCoup" id="Q7ZUK0">
    <property type="interactions" value="1338"/>
</dbReference>
<dbReference type="STRING" id="7955.ENSDARP00000121982"/>
<dbReference type="PaxDb" id="7955-ENSDARP00000121982"/>
<dbReference type="AGR" id="ZFIN:ZDB-GENE-030131-5997"/>
<dbReference type="ZFIN" id="ZDB-GENE-030131-5997">
    <property type="gene designation" value="rnf146"/>
</dbReference>
<dbReference type="eggNOG" id="KOG0824">
    <property type="taxonomic scope" value="Eukaryota"/>
</dbReference>
<dbReference type="InParanoid" id="Q7ZUK0"/>
<dbReference type="PhylomeDB" id="Q7ZUK0"/>
<dbReference type="Reactome" id="R-DRE-8948751">
    <property type="pathway name" value="Regulation of PTEN stability and activity"/>
</dbReference>
<dbReference type="UniPathway" id="UPA00143"/>
<dbReference type="PRO" id="PR:Q7ZUK0"/>
<dbReference type="Proteomes" id="UP000000437">
    <property type="component" value="Unplaced"/>
</dbReference>
<dbReference type="GO" id="GO:0005737">
    <property type="term" value="C:cytoplasm"/>
    <property type="evidence" value="ECO:0000318"/>
    <property type="project" value="GO_Central"/>
</dbReference>
<dbReference type="GO" id="GO:0005829">
    <property type="term" value="C:cytosol"/>
    <property type="evidence" value="ECO:0000250"/>
    <property type="project" value="UniProtKB"/>
</dbReference>
<dbReference type="GO" id="GO:0005634">
    <property type="term" value="C:nucleus"/>
    <property type="evidence" value="ECO:0000318"/>
    <property type="project" value="GO_Central"/>
</dbReference>
<dbReference type="GO" id="GO:0072572">
    <property type="term" value="F:poly-ADP-D-ribose binding"/>
    <property type="evidence" value="ECO:0000250"/>
    <property type="project" value="UniProtKB"/>
</dbReference>
<dbReference type="GO" id="GO:0061630">
    <property type="term" value="F:ubiquitin protein ligase activity"/>
    <property type="evidence" value="ECO:0007669"/>
    <property type="project" value="InterPro"/>
</dbReference>
<dbReference type="GO" id="GO:0004842">
    <property type="term" value="F:ubiquitin-protein transferase activity"/>
    <property type="evidence" value="ECO:0000250"/>
    <property type="project" value="UniProtKB"/>
</dbReference>
<dbReference type="GO" id="GO:0008270">
    <property type="term" value="F:zinc ion binding"/>
    <property type="evidence" value="ECO:0007669"/>
    <property type="project" value="UniProtKB-KW"/>
</dbReference>
<dbReference type="GO" id="GO:0090263">
    <property type="term" value="P:positive regulation of canonical Wnt signaling pathway"/>
    <property type="evidence" value="ECO:0000250"/>
    <property type="project" value="UniProtKB"/>
</dbReference>
<dbReference type="GO" id="GO:0051865">
    <property type="term" value="P:protein autoubiquitination"/>
    <property type="evidence" value="ECO:0000250"/>
    <property type="project" value="UniProtKB"/>
</dbReference>
<dbReference type="GO" id="GO:0070936">
    <property type="term" value="P:protein K48-linked ubiquitination"/>
    <property type="evidence" value="ECO:0000250"/>
    <property type="project" value="UniProtKB"/>
</dbReference>
<dbReference type="GO" id="GO:0006511">
    <property type="term" value="P:ubiquitin-dependent protein catabolic process"/>
    <property type="evidence" value="ECO:0000250"/>
    <property type="project" value="UniProtKB"/>
</dbReference>
<dbReference type="GO" id="GO:0016055">
    <property type="term" value="P:Wnt signaling pathway"/>
    <property type="evidence" value="ECO:0007669"/>
    <property type="project" value="UniProtKB-KW"/>
</dbReference>
<dbReference type="CDD" id="cd16546">
    <property type="entry name" value="RING-HC_RNF146"/>
    <property type="match status" value="1"/>
</dbReference>
<dbReference type="FunFam" id="3.30.40.10:FF:000204">
    <property type="entry name" value="E3 ubiquitin-protein ligase RNF146"/>
    <property type="match status" value="1"/>
</dbReference>
<dbReference type="FunFam" id="3.30.720.50:FF:000003">
    <property type="entry name" value="E3 ubiquitin-protein ligase RNF146"/>
    <property type="match status" value="1"/>
</dbReference>
<dbReference type="Gene3D" id="3.30.720.50">
    <property type="match status" value="1"/>
</dbReference>
<dbReference type="Gene3D" id="3.30.40.10">
    <property type="entry name" value="Zinc/RING finger domain, C3HC4 (zinc finger)"/>
    <property type="match status" value="1"/>
</dbReference>
<dbReference type="InterPro" id="IPR044110">
    <property type="entry name" value="RING-HC_RNF146"/>
</dbReference>
<dbReference type="InterPro" id="IPR033509">
    <property type="entry name" value="RNF146"/>
</dbReference>
<dbReference type="InterPro" id="IPR018123">
    <property type="entry name" value="WWE-dom_subgr"/>
</dbReference>
<dbReference type="InterPro" id="IPR004170">
    <property type="entry name" value="WWE_dom"/>
</dbReference>
<dbReference type="InterPro" id="IPR037197">
    <property type="entry name" value="WWE_dom_sf"/>
</dbReference>
<dbReference type="InterPro" id="IPR001841">
    <property type="entry name" value="Znf_RING"/>
</dbReference>
<dbReference type="InterPro" id="IPR013083">
    <property type="entry name" value="Znf_RING/FYVE/PHD"/>
</dbReference>
<dbReference type="InterPro" id="IPR017907">
    <property type="entry name" value="Znf_RING_CS"/>
</dbReference>
<dbReference type="PANTHER" id="PTHR13417">
    <property type="entry name" value="E3 UBIQUITIN-PROTEIN LIGASE RNF146"/>
    <property type="match status" value="1"/>
</dbReference>
<dbReference type="PANTHER" id="PTHR13417:SF2">
    <property type="entry name" value="E3 UBIQUITIN-PROTEIN LIGASE RNF146"/>
    <property type="match status" value="1"/>
</dbReference>
<dbReference type="Pfam" id="PF02825">
    <property type="entry name" value="WWE"/>
    <property type="match status" value="1"/>
</dbReference>
<dbReference type="SMART" id="SM00184">
    <property type="entry name" value="RING"/>
    <property type="match status" value="1"/>
</dbReference>
<dbReference type="SMART" id="SM00678">
    <property type="entry name" value="WWE"/>
    <property type="match status" value="1"/>
</dbReference>
<dbReference type="SUPFAM" id="SSF57850">
    <property type="entry name" value="RING/U-box"/>
    <property type="match status" value="1"/>
</dbReference>
<dbReference type="SUPFAM" id="SSF117839">
    <property type="entry name" value="WWE domain"/>
    <property type="match status" value="1"/>
</dbReference>
<dbReference type="PROSITE" id="PS50918">
    <property type="entry name" value="WWE"/>
    <property type="match status" value="1"/>
</dbReference>
<dbReference type="PROSITE" id="PS00518">
    <property type="entry name" value="ZF_RING_1"/>
    <property type="match status" value="1"/>
</dbReference>
<dbReference type="PROSITE" id="PS50089">
    <property type="entry name" value="ZF_RING_2"/>
    <property type="match status" value="1"/>
</dbReference>
<reference key="1">
    <citation type="journal article" date="2013" name="Nature">
        <title>The zebrafish reference genome sequence and its relationship to the human genome.</title>
        <authorList>
            <person name="Howe K."/>
            <person name="Clark M.D."/>
            <person name="Torroja C.F."/>
            <person name="Torrance J."/>
            <person name="Berthelot C."/>
            <person name="Muffato M."/>
            <person name="Collins J.E."/>
            <person name="Humphray S."/>
            <person name="McLaren K."/>
            <person name="Matthews L."/>
            <person name="McLaren S."/>
            <person name="Sealy I."/>
            <person name="Caccamo M."/>
            <person name="Churcher C."/>
            <person name="Scott C."/>
            <person name="Barrett J.C."/>
            <person name="Koch R."/>
            <person name="Rauch G.J."/>
            <person name="White S."/>
            <person name="Chow W."/>
            <person name="Kilian B."/>
            <person name="Quintais L.T."/>
            <person name="Guerra-Assuncao J.A."/>
            <person name="Zhou Y."/>
            <person name="Gu Y."/>
            <person name="Yen J."/>
            <person name="Vogel J.H."/>
            <person name="Eyre T."/>
            <person name="Redmond S."/>
            <person name="Banerjee R."/>
            <person name="Chi J."/>
            <person name="Fu B."/>
            <person name="Langley E."/>
            <person name="Maguire S.F."/>
            <person name="Laird G.K."/>
            <person name="Lloyd D."/>
            <person name="Kenyon E."/>
            <person name="Donaldson S."/>
            <person name="Sehra H."/>
            <person name="Almeida-King J."/>
            <person name="Loveland J."/>
            <person name="Trevanion S."/>
            <person name="Jones M."/>
            <person name="Quail M."/>
            <person name="Willey D."/>
            <person name="Hunt A."/>
            <person name="Burton J."/>
            <person name="Sims S."/>
            <person name="McLay K."/>
            <person name="Plumb B."/>
            <person name="Davis J."/>
            <person name="Clee C."/>
            <person name="Oliver K."/>
            <person name="Clark R."/>
            <person name="Riddle C."/>
            <person name="Elliot D."/>
            <person name="Threadgold G."/>
            <person name="Harden G."/>
            <person name="Ware D."/>
            <person name="Begum S."/>
            <person name="Mortimore B."/>
            <person name="Kerry G."/>
            <person name="Heath P."/>
            <person name="Phillimore B."/>
            <person name="Tracey A."/>
            <person name="Corby N."/>
            <person name="Dunn M."/>
            <person name="Johnson C."/>
            <person name="Wood J."/>
            <person name="Clark S."/>
            <person name="Pelan S."/>
            <person name="Griffiths G."/>
            <person name="Smith M."/>
            <person name="Glithero R."/>
            <person name="Howden P."/>
            <person name="Barker N."/>
            <person name="Lloyd C."/>
            <person name="Stevens C."/>
            <person name="Harley J."/>
            <person name="Holt K."/>
            <person name="Panagiotidis G."/>
            <person name="Lovell J."/>
            <person name="Beasley H."/>
            <person name="Henderson C."/>
            <person name="Gordon D."/>
            <person name="Auger K."/>
            <person name="Wright D."/>
            <person name="Collins J."/>
            <person name="Raisen C."/>
            <person name="Dyer L."/>
            <person name="Leung K."/>
            <person name="Robertson L."/>
            <person name="Ambridge K."/>
            <person name="Leongamornlert D."/>
            <person name="McGuire S."/>
            <person name="Gilderthorp R."/>
            <person name="Griffiths C."/>
            <person name="Manthravadi D."/>
            <person name="Nichol S."/>
            <person name="Barker G."/>
            <person name="Whitehead S."/>
            <person name="Kay M."/>
            <person name="Brown J."/>
            <person name="Murnane C."/>
            <person name="Gray E."/>
            <person name="Humphries M."/>
            <person name="Sycamore N."/>
            <person name="Barker D."/>
            <person name="Saunders D."/>
            <person name="Wallis J."/>
            <person name="Babbage A."/>
            <person name="Hammond S."/>
            <person name="Mashreghi-Mohammadi M."/>
            <person name="Barr L."/>
            <person name="Martin S."/>
            <person name="Wray P."/>
            <person name="Ellington A."/>
            <person name="Matthews N."/>
            <person name="Ellwood M."/>
            <person name="Woodmansey R."/>
            <person name="Clark G."/>
            <person name="Cooper J."/>
            <person name="Tromans A."/>
            <person name="Grafham D."/>
            <person name="Skuce C."/>
            <person name="Pandian R."/>
            <person name="Andrews R."/>
            <person name="Harrison E."/>
            <person name="Kimberley A."/>
            <person name="Garnett J."/>
            <person name="Fosker N."/>
            <person name="Hall R."/>
            <person name="Garner P."/>
            <person name="Kelly D."/>
            <person name="Bird C."/>
            <person name="Palmer S."/>
            <person name="Gehring I."/>
            <person name="Berger A."/>
            <person name="Dooley C.M."/>
            <person name="Ersan-Urun Z."/>
            <person name="Eser C."/>
            <person name="Geiger H."/>
            <person name="Geisler M."/>
            <person name="Karotki L."/>
            <person name="Kirn A."/>
            <person name="Konantz J."/>
            <person name="Konantz M."/>
            <person name="Oberlander M."/>
            <person name="Rudolph-Geiger S."/>
            <person name="Teucke M."/>
            <person name="Lanz C."/>
            <person name="Raddatz G."/>
            <person name="Osoegawa K."/>
            <person name="Zhu B."/>
            <person name="Rapp A."/>
            <person name="Widaa S."/>
            <person name="Langford C."/>
            <person name="Yang F."/>
            <person name="Schuster S.C."/>
            <person name="Carter N.P."/>
            <person name="Harrow J."/>
            <person name="Ning Z."/>
            <person name="Herrero J."/>
            <person name="Searle S.M."/>
            <person name="Enright A."/>
            <person name="Geisler R."/>
            <person name="Plasterk R.H."/>
            <person name="Lee C."/>
            <person name="Westerfield M."/>
            <person name="de Jong P.J."/>
            <person name="Zon L.I."/>
            <person name="Postlethwait J.H."/>
            <person name="Nusslein-Volhard C."/>
            <person name="Hubbard T.J."/>
            <person name="Roest Crollius H."/>
            <person name="Rogers J."/>
            <person name="Stemple D.L."/>
        </authorList>
    </citation>
    <scope>NUCLEOTIDE SEQUENCE [LARGE SCALE GENOMIC DNA]</scope>
    <source>
        <strain>Tuebingen</strain>
    </source>
</reference>
<reference key="2">
    <citation type="submission" date="2003-03" db="EMBL/GenBank/DDBJ databases">
        <authorList>
            <consortium name="NIH - Zebrafish Gene Collection (ZGC) project"/>
        </authorList>
    </citation>
    <scope>NUCLEOTIDE SEQUENCE [LARGE SCALE MRNA]</scope>
    <source>
        <strain>AB</strain>
    </source>
</reference>